<keyword id="KW-0963">Cytoplasm</keyword>
<keyword id="KW-0448">Lipopolysaccharide biosynthesis</keyword>
<keyword id="KW-0808">Transferase</keyword>
<feature type="chain" id="PRO_0000304453" description="2-dehydro-3-deoxyphosphooctonate aldolase">
    <location>
        <begin position="1"/>
        <end position="284"/>
    </location>
</feature>
<comment type="catalytic activity">
    <reaction evidence="1">
        <text>D-arabinose 5-phosphate + phosphoenolpyruvate + H2O = 3-deoxy-alpha-D-manno-2-octulosonate-8-phosphate + phosphate</text>
        <dbReference type="Rhea" id="RHEA:14053"/>
        <dbReference type="ChEBI" id="CHEBI:15377"/>
        <dbReference type="ChEBI" id="CHEBI:43474"/>
        <dbReference type="ChEBI" id="CHEBI:57693"/>
        <dbReference type="ChEBI" id="CHEBI:58702"/>
        <dbReference type="ChEBI" id="CHEBI:85985"/>
        <dbReference type="EC" id="2.5.1.55"/>
    </reaction>
</comment>
<comment type="pathway">
    <text evidence="1">Carbohydrate biosynthesis; 3-deoxy-D-manno-octulosonate biosynthesis; 3-deoxy-D-manno-octulosonate from D-ribulose 5-phosphate: step 2/3.</text>
</comment>
<comment type="pathway">
    <text evidence="1">Bacterial outer membrane biogenesis; lipopolysaccharide biosynthesis.</text>
</comment>
<comment type="subcellular location">
    <subcellularLocation>
        <location evidence="1">Cytoplasm</location>
    </subcellularLocation>
</comment>
<comment type="similarity">
    <text evidence="1">Belongs to the KdsA family.</text>
</comment>
<dbReference type="EC" id="2.5.1.55" evidence="1"/>
<dbReference type="EMBL" id="CP000436">
    <property type="protein sequence ID" value="ABI25221.1"/>
    <property type="molecule type" value="Genomic_DNA"/>
</dbReference>
<dbReference type="SMR" id="Q0I3B9"/>
<dbReference type="KEGG" id="hso:HS_0946"/>
<dbReference type="eggNOG" id="COG2877">
    <property type="taxonomic scope" value="Bacteria"/>
</dbReference>
<dbReference type="HOGENOM" id="CLU_036666_0_0_6"/>
<dbReference type="UniPathway" id="UPA00030"/>
<dbReference type="UniPathway" id="UPA00357">
    <property type="reaction ID" value="UER00474"/>
</dbReference>
<dbReference type="GO" id="GO:0005737">
    <property type="term" value="C:cytoplasm"/>
    <property type="evidence" value="ECO:0007669"/>
    <property type="project" value="UniProtKB-SubCell"/>
</dbReference>
<dbReference type="GO" id="GO:0008676">
    <property type="term" value="F:3-deoxy-8-phosphooctulonate synthase activity"/>
    <property type="evidence" value="ECO:0007669"/>
    <property type="project" value="UniProtKB-UniRule"/>
</dbReference>
<dbReference type="GO" id="GO:0019294">
    <property type="term" value="P:keto-3-deoxy-D-manno-octulosonic acid biosynthetic process"/>
    <property type="evidence" value="ECO:0007669"/>
    <property type="project" value="UniProtKB-UniRule"/>
</dbReference>
<dbReference type="FunFam" id="3.20.20.70:FF:000058">
    <property type="entry name" value="2-dehydro-3-deoxyphosphooctonate aldolase"/>
    <property type="match status" value="1"/>
</dbReference>
<dbReference type="Gene3D" id="3.20.20.70">
    <property type="entry name" value="Aldolase class I"/>
    <property type="match status" value="1"/>
</dbReference>
<dbReference type="HAMAP" id="MF_00056">
    <property type="entry name" value="KDO8P_synth"/>
    <property type="match status" value="1"/>
</dbReference>
<dbReference type="InterPro" id="IPR013785">
    <property type="entry name" value="Aldolase_TIM"/>
</dbReference>
<dbReference type="InterPro" id="IPR006218">
    <property type="entry name" value="DAHP1/KDSA"/>
</dbReference>
<dbReference type="InterPro" id="IPR006269">
    <property type="entry name" value="KDO8P_synthase"/>
</dbReference>
<dbReference type="NCBIfam" id="TIGR01362">
    <property type="entry name" value="KDO8P_synth"/>
    <property type="match status" value="1"/>
</dbReference>
<dbReference type="NCBIfam" id="NF003543">
    <property type="entry name" value="PRK05198.1"/>
    <property type="match status" value="1"/>
</dbReference>
<dbReference type="NCBIfam" id="NF009109">
    <property type="entry name" value="PRK12457.1"/>
    <property type="match status" value="1"/>
</dbReference>
<dbReference type="PANTHER" id="PTHR21057">
    <property type="entry name" value="PHOSPHO-2-DEHYDRO-3-DEOXYHEPTONATE ALDOLASE"/>
    <property type="match status" value="1"/>
</dbReference>
<dbReference type="Pfam" id="PF00793">
    <property type="entry name" value="DAHP_synth_1"/>
    <property type="match status" value="1"/>
</dbReference>
<dbReference type="SUPFAM" id="SSF51569">
    <property type="entry name" value="Aldolase"/>
    <property type="match status" value="1"/>
</dbReference>
<accession>Q0I3B9</accession>
<evidence type="ECO:0000255" key="1">
    <source>
        <dbReference type="HAMAP-Rule" id="MF_00056"/>
    </source>
</evidence>
<sequence length="284" mass="31215">MQNQVIQLGNIEIGNNKPFVLFGGMNVLESRDMAMQVCEKYVEVTQKLGVPYIFKASFDKANRSSIHSYRGPGMEEGLKIFQELKETFGVKVITDVHEIYQCRPVAEVVDIIQLPAFLARQTDLVEAMARTGAVINVKKPQFLSPGQIGNIVEKIAECGNNKVILCDRGTNFGYDNLVVDMLGFNIMKKVSQGCPVIFDVTHSLQCRDPFGAASGGRRDQVTELARSGMAIGLAGLFLESHPNPNQAKCDGPSALPLSKLEPFIAQMKAIDDLVKSFEEIDTSN</sequence>
<reference key="1">
    <citation type="journal article" date="2007" name="J. Bacteriol.">
        <title>Complete genome sequence of Haemophilus somnus (Histophilus somni) strain 129Pt and comparison to Haemophilus ducreyi 35000HP and Haemophilus influenzae Rd.</title>
        <authorList>
            <person name="Challacombe J.F."/>
            <person name="Duncan A.J."/>
            <person name="Brettin T.S."/>
            <person name="Bruce D."/>
            <person name="Chertkov O."/>
            <person name="Detter J.C."/>
            <person name="Han C.S."/>
            <person name="Misra M."/>
            <person name="Richardson P."/>
            <person name="Tapia R."/>
            <person name="Thayer N."/>
            <person name="Xie G."/>
            <person name="Inzana T.J."/>
        </authorList>
    </citation>
    <scope>NUCLEOTIDE SEQUENCE [LARGE SCALE GENOMIC DNA]</scope>
    <source>
        <strain>129Pt</strain>
    </source>
</reference>
<proteinExistence type="inferred from homology"/>
<protein>
    <recommendedName>
        <fullName evidence="1">2-dehydro-3-deoxyphosphooctonate aldolase</fullName>
        <ecNumber evidence="1">2.5.1.55</ecNumber>
    </recommendedName>
    <alternativeName>
        <fullName evidence="1">3-deoxy-D-manno-octulosonic acid 8-phosphate synthase</fullName>
    </alternativeName>
    <alternativeName>
        <fullName evidence="1">KDO-8-phosphate synthase</fullName>
        <shortName evidence="1">KDO 8-P synthase</shortName>
        <shortName evidence="1">KDOPS</shortName>
    </alternativeName>
    <alternativeName>
        <fullName evidence="1">Phospho-2-dehydro-3-deoxyoctonate aldolase</fullName>
    </alternativeName>
</protein>
<organism>
    <name type="scientific">Histophilus somni (strain 129Pt)</name>
    <name type="common">Haemophilus somnus</name>
    <dbReference type="NCBI Taxonomy" id="205914"/>
    <lineage>
        <taxon>Bacteria</taxon>
        <taxon>Pseudomonadati</taxon>
        <taxon>Pseudomonadota</taxon>
        <taxon>Gammaproteobacteria</taxon>
        <taxon>Pasteurellales</taxon>
        <taxon>Pasteurellaceae</taxon>
        <taxon>Histophilus</taxon>
    </lineage>
</organism>
<gene>
    <name evidence="1" type="primary">kdsA</name>
    <name type="ordered locus">HS_0946</name>
</gene>
<name>KDSA_HISS1</name>